<feature type="chain" id="PRO_1000190292" description="Porphobilinogen deaminase">
    <location>
        <begin position="1"/>
        <end position="306"/>
    </location>
</feature>
<feature type="modified residue" description="S-(dipyrrolylmethanemethyl)cysteine" evidence="1">
    <location>
        <position position="240"/>
    </location>
</feature>
<name>HEM3_SYNWW</name>
<gene>
    <name evidence="1" type="primary">hemC</name>
    <name type="ordered locus">Swol_0685</name>
</gene>
<sequence length="306" mass="33283">MRNLRLGTRGSQLALWQARHVASLLESSIPDLKVEIKTIKTTGDKILDVALSKIGDKGLFTKEIEKELLDGEIDIAVHSMKDLPSELPPGLCIAAVLEREDPRDVLLSHKNYSLADLPQAALIGTSSLRRIAQLKAWRPDLQLVDMRGNVETRIRKMKEQDLDGIILACAGVKRLGLEEMISDYLPAHLVLPAVGQGMIAVEARSDEQDVLKLLSRINHQDSFLAGQAERGFLHELGGGCQVPVASLAELQGGQLHIRGLIASLDGKEKYSGSSDCSPPEAEEAGRELARSLLQQGGAAILCETRK</sequence>
<proteinExistence type="inferred from homology"/>
<protein>
    <recommendedName>
        <fullName evidence="1">Porphobilinogen deaminase</fullName>
        <shortName evidence="1">PBG</shortName>
        <ecNumber evidence="1">2.5.1.61</ecNumber>
    </recommendedName>
    <alternativeName>
        <fullName evidence="1">Hydroxymethylbilane synthase</fullName>
        <shortName evidence="1">HMBS</shortName>
    </alternativeName>
    <alternativeName>
        <fullName evidence="1">Pre-uroporphyrinogen synthase</fullName>
    </alternativeName>
</protein>
<accession>Q0AZ43</accession>
<reference key="1">
    <citation type="journal article" date="2010" name="Environ. Microbiol.">
        <title>The genome of Syntrophomonas wolfei: new insights into syntrophic metabolism and biohydrogen production.</title>
        <authorList>
            <person name="Sieber J.R."/>
            <person name="Sims D.R."/>
            <person name="Han C."/>
            <person name="Kim E."/>
            <person name="Lykidis A."/>
            <person name="Lapidus A.L."/>
            <person name="McDonnald E."/>
            <person name="Rohlin L."/>
            <person name="Culley D.E."/>
            <person name="Gunsalus R."/>
            <person name="McInerney M.J."/>
        </authorList>
    </citation>
    <scope>NUCLEOTIDE SEQUENCE [LARGE SCALE GENOMIC DNA]</scope>
    <source>
        <strain>DSM 2245B / Goettingen</strain>
    </source>
</reference>
<evidence type="ECO:0000255" key="1">
    <source>
        <dbReference type="HAMAP-Rule" id="MF_00260"/>
    </source>
</evidence>
<keyword id="KW-0627">Porphyrin biosynthesis</keyword>
<keyword id="KW-1185">Reference proteome</keyword>
<keyword id="KW-0808">Transferase</keyword>
<comment type="function">
    <text evidence="1">Tetrapolymerization of the monopyrrole PBG into the hydroxymethylbilane pre-uroporphyrinogen in several discrete steps.</text>
</comment>
<comment type="catalytic activity">
    <reaction evidence="1">
        <text>4 porphobilinogen + H2O = hydroxymethylbilane + 4 NH4(+)</text>
        <dbReference type="Rhea" id="RHEA:13185"/>
        <dbReference type="ChEBI" id="CHEBI:15377"/>
        <dbReference type="ChEBI" id="CHEBI:28938"/>
        <dbReference type="ChEBI" id="CHEBI:57845"/>
        <dbReference type="ChEBI" id="CHEBI:58126"/>
        <dbReference type="EC" id="2.5.1.61"/>
    </reaction>
</comment>
<comment type="cofactor">
    <cofactor evidence="1">
        <name>dipyrromethane</name>
        <dbReference type="ChEBI" id="CHEBI:60342"/>
    </cofactor>
    <text evidence="1">Binds 1 dipyrromethane group covalently.</text>
</comment>
<comment type="pathway">
    <text evidence="1">Porphyrin-containing compound metabolism; protoporphyrin-IX biosynthesis; coproporphyrinogen-III from 5-aminolevulinate: step 2/4.</text>
</comment>
<comment type="subunit">
    <text evidence="1">Monomer.</text>
</comment>
<comment type="miscellaneous">
    <text evidence="1">The porphobilinogen subunits are added to the dipyrromethane group.</text>
</comment>
<comment type="similarity">
    <text evidence="1">Belongs to the HMBS family.</text>
</comment>
<dbReference type="EC" id="2.5.1.61" evidence="1"/>
<dbReference type="EMBL" id="CP000448">
    <property type="protein sequence ID" value="ABI68011.1"/>
    <property type="molecule type" value="Genomic_DNA"/>
</dbReference>
<dbReference type="RefSeq" id="WP_011640116.1">
    <property type="nucleotide sequence ID" value="NC_008346.1"/>
</dbReference>
<dbReference type="SMR" id="Q0AZ43"/>
<dbReference type="STRING" id="335541.Swol_0685"/>
<dbReference type="KEGG" id="swo:Swol_0685"/>
<dbReference type="eggNOG" id="COG0181">
    <property type="taxonomic scope" value="Bacteria"/>
</dbReference>
<dbReference type="HOGENOM" id="CLU_019704_0_2_9"/>
<dbReference type="OrthoDB" id="9810298at2"/>
<dbReference type="UniPathway" id="UPA00251">
    <property type="reaction ID" value="UER00319"/>
</dbReference>
<dbReference type="Proteomes" id="UP000001968">
    <property type="component" value="Chromosome"/>
</dbReference>
<dbReference type="GO" id="GO:0005737">
    <property type="term" value="C:cytoplasm"/>
    <property type="evidence" value="ECO:0007669"/>
    <property type="project" value="TreeGrafter"/>
</dbReference>
<dbReference type="GO" id="GO:0004418">
    <property type="term" value="F:hydroxymethylbilane synthase activity"/>
    <property type="evidence" value="ECO:0007669"/>
    <property type="project" value="UniProtKB-UniRule"/>
</dbReference>
<dbReference type="GO" id="GO:0006782">
    <property type="term" value="P:protoporphyrinogen IX biosynthetic process"/>
    <property type="evidence" value="ECO:0007669"/>
    <property type="project" value="UniProtKB-UniRule"/>
</dbReference>
<dbReference type="CDD" id="cd13646">
    <property type="entry name" value="PBP2_EcHMBS_like"/>
    <property type="match status" value="1"/>
</dbReference>
<dbReference type="FunFam" id="3.40.190.10:FF:000004">
    <property type="entry name" value="Porphobilinogen deaminase"/>
    <property type="match status" value="1"/>
</dbReference>
<dbReference type="FunFam" id="3.40.190.10:FF:000005">
    <property type="entry name" value="Porphobilinogen deaminase"/>
    <property type="match status" value="1"/>
</dbReference>
<dbReference type="Gene3D" id="3.40.190.10">
    <property type="entry name" value="Periplasmic binding protein-like II"/>
    <property type="match status" value="2"/>
</dbReference>
<dbReference type="Gene3D" id="3.30.160.40">
    <property type="entry name" value="Porphobilinogen deaminase, C-terminal domain"/>
    <property type="match status" value="1"/>
</dbReference>
<dbReference type="HAMAP" id="MF_00260">
    <property type="entry name" value="Porphobil_deam"/>
    <property type="match status" value="1"/>
</dbReference>
<dbReference type="InterPro" id="IPR000860">
    <property type="entry name" value="HemC"/>
</dbReference>
<dbReference type="InterPro" id="IPR022419">
    <property type="entry name" value="Porphobilin_deaminase_cofac_BS"/>
</dbReference>
<dbReference type="InterPro" id="IPR022417">
    <property type="entry name" value="Porphobilin_deaminase_N"/>
</dbReference>
<dbReference type="InterPro" id="IPR022418">
    <property type="entry name" value="Porphobilinogen_deaminase_C"/>
</dbReference>
<dbReference type="InterPro" id="IPR036803">
    <property type="entry name" value="Porphobilinogen_deaminase_C_sf"/>
</dbReference>
<dbReference type="NCBIfam" id="TIGR00212">
    <property type="entry name" value="hemC"/>
    <property type="match status" value="1"/>
</dbReference>
<dbReference type="PANTHER" id="PTHR11557">
    <property type="entry name" value="PORPHOBILINOGEN DEAMINASE"/>
    <property type="match status" value="1"/>
</dbReference>
<dbReference type="PANTHER" id="PTHR11557:SF0">
    <property type="entry name" value="PORPHOBILINOGEN DEAMINASE"/>
    <property type="match status" value="1"/>
</dbReference>
<dbReference type="Pfam" id="PF01379">
    <property type="entry name" value="Porphobil_deam"/>
    <property type="match status" value="1"/>
</dbReference>
<dbReference type="Pfam" id="PF03900">
    <property type="entry name" value="Porphobil_deamC"/>
    <property type="match status" value="1"/>
</dbReference>
<dbReference type="PIRSF" id="PIRSF001438">
    <property type="entry name" value="4pyrrol_synth_OHMeBilane_synth"/>
    <property type="match status" value="1"/>
</dbReference>
<dbReference type="PRINTS" id="PR00151">
    <property type="entry name" value="PORPHBDMNASE"/>
</dbReference>
<dbReference type="SUPFAM" id="SSF53850">
    <property type="entry name" value="Periplasmic binding protein-like II"/>
    <property type="match status" value="1"/>
</dbReference>
<dbReference type="SUPFAM" id="SSF54782">
    <property type="entry name" value="Porphobilinogen deaminase (hydroxymethylbilane synthase), C-terminal domain"/>
    <property type="match status" value="1"/>
</dbReference>
<dbReference type="PROSITE" id="PS00533">
    <property type="entry name" value="PORPHOBILINOGEN_DEAM"/>
    <property type="match status" value="1"/>
</dbReference>
<organism>
    <name type="scientific">Syntrophomonas wolfei subsp. wolfei (strain DSM 2245B / Goettingen)</name>
    <dbReference type="NCBI Taxonomy" id="335541"/>
    <lineage>
        <taxon>Bacteria</taxon>
        <taxon>Bacillati</taxon>
        <taxon>Bacillota</taxon>
        <taxon>Clostridia</taxon>
        <taxon>Eubacteriales</taxon>
        <taxon>Syntrophomonadaceae</taxon>
        <taxon>Syntrophomonas</taxon>
    </lineage>
</organism>